<gene>
    <name evidence="14" type="primary">csgA</name>
    <name type="synonym">spoC</name>
</gene>
<name>CSGA_MYXXA</name>
<protein>
    <recommendedName>
        <fullName evidence="12">C-signal</fullName>
    </recommendedName>
    <alternativeName>
        <fullName evidence="11">17-kDa C-factor protein</fullName>
        <shortName evidence="10">p17</shortName>
    </alternativeName>
    <alternativeName>
        <fullName evidence="13">C-factor</fullName>
    </alternativeName>
    <alternativeName>
        <fullName evidence="9">Cell surface-associated intercellular C-signal</fullName>
    </alternativeName>
</protein>
<reference key="1">
    <citation type="journal article" date="1990" name="J. Bacteriol.">
        <title>Nucleotide sequence and transcriptional products of the csg locus of Myxococcus xanthus.</title>
        <authorList>
            <person name="Hagen T.J."/>
            <person name="Shimkets L.J."/>
        </authorList>
    </citation>
    <scope>NUCLEOTIDE SEQUENCE [GENOMIC DNA]</scope>
    <scope>INDUCTION</scope>
</reference>
<reference key="2">
    <citation type="journal article" date="1990" name="Cell">
        <title>C-factor: a cell-cell signaling protein required for fruiting body morphogenesis of M. xanthus.</title>
        <authorList>
            <person name="Kin S.K."/>
            <person name="Kaiser D."/>
        </authorList>
    </citation>
    <scope>PROTEIN SEQUENCE OF 93-102</scope>
    <scope>FUNCTION</scope>
    <scope>DISRUPTION PHENOTYPE</scope>
    <source>
        <strain>DK1622</strain>
    </source>
</reference>
<reference key="3">
    <citation type="journal article" date="1990" name="J. Bacteriol.">
        <title>CsgA, an extracellular protein essential for Myxococcus xanthus development.</title>
        <authorList>
            <person name="Shimkets L.J."/>
            <person name="Rafiee H."/>
        </authorList>
    </citation>
    <scope>FUNCTION</scope>
    <scope>SUBCELLULAR LOCATION</scope>
    <source>
        <strain>DK101</strain>
        <strain>DK1622</strain>
    </source>
</reference>
<reference key="4">
    <citation type="journal article" date="1992" name="Genes Dev.">
        <title>csgA expression entrains Myxococcus xanthus development.</title>
        <authorList>
            <person name="Li S."/>
            <person name="Lee B.U."/>
            <person name="Shimkets L.J."/>
        </authorList>
    </citation>
    <scope>TRANSCRIPTIONAL REGULATION</scope>
</reference>
<reference key="5">
    <citation type="journal article" date="1999" name="Proc. Natl. Acad. Sci. U.S.A.">
        <title>The cell surface-associated intercellular C-signal induces behavioral changes in individual Myxococcus xanthus cells during fruiting body morphogenesis.</title>
        <authorList>
            <person name="Jelsbak L."/>
            <person name="Soegaard-Andersen L."/>
        </authorList>
    </citation>
    <scope>FUNCTION</scope>
</reference>
<reference key="6">
    <citation type="journal article" date="2001" name="Mol. Microbiol.">
        <title>C-signal: a cell surface-associated morphogen that induces and co-ordinates multicellular fruiting body morphogenesis and sporulation in Myxococcus xanthus.</title>
        <authorList>
            <person name="Kruse T."/>
            <person name="Lobedanz S."/>
            <person name="Berthelsen N.M."/>
            <person name="Soegaard-Andersen L."/>
        </authorList>
    </citation>
    <scope>FUNCTION</scope>
    <scope>OVERPRODUCTION</scope>
</reference>
<reference key="7">
    <citation type="journal article" date="2003" name="Genes Dev.">
        <title>Identification of the C-signal, a contact-dependent morphogen coordinating multiple developmental responses in Myxococcus xanthus.</title>
        <authorList>
            <person name="Lobedanz S."/>
            <person name="Soegaard-Andersen L."/>
        </authorList>
    </citation>
    <scope>FUNCTION</scope>
    <scope>ACTIVITY REGULATION</scope>
    <scope>SUBCELLULAR LOCATION</scope>
    <scope>PROTEOLYTIC CLEAVAGE</scope>
</reference>
<reference key="8">
    <citation type="journal article" date="2008" name="Dev. Cell">
        <title>Regulated secretion of a protease activates intercellular signaling during fruiting body formation in M. xanthus.</title>
        <authorList>
            <person name="Rolbetzki A."/>
            <person name="Ammon M."/>
            <person name="Jakovljevic V."/>
            <person name="Konovalova A."/>
            <person name="Soegaard-Andersen L."/>
        </authorList>
    </citation>
    <scope>PROTEOLYTIC CLEAVAGE BY POPC</scope>
    <source>
        <strain>DK1622</strain>
    </source>
</reference>
<dbReference type="EMBL" id="L27429">
    <property type="protein sequence ID" value="AAA25391.1"/>
    <property type="molecule type" value="Genomic_DNA"/>
</dbReference>
<dbReference type="PIR" id="T10125">
    <property type="entry name" value="T10125"/>
</dbReference>
<dbReference type="RefSeq" id="WP_011551411.1">
    <property type="nucleotide sequence ID" value="NZ_JABFNQ010000064.1"/>
</dbReference>
<dbReference type="SMR" id="P21158"/>
<dbReference type="GO" id="GO:0009279">
    <property type="term" value="C:cell outer membrane"/>
    <property type="evidence" value="ECO:0007669"/>
    <property type="project" value="UniProtKB-SubCell"/>
</dbReference>
<dbReference type="GO" id="GO:0005576">
    <property type="term" value="C:extracellular region"/>
    <property type="evidence" value="ECO:0007669"/>
    <property type="project" value="UniProtKB-SubCell"/>
</dbReference>
<dbReference type="GO" id="GO:0016616">
    <property type="term" value="F:oxidoreductase activity, acting on the CH-OH group of donors, NAD or NADP as acceptor"/>
    <property type="evidence" value="ECO:0007669"/>
    <property type="project" value="TreeGrafter"/>
</dbReference>
<dbReference type="GO" id="GO:0030435">
    <property type="term" value="P:sporulation resulting in formation of a cellular spore"/>
    <property type="evidence" value="ECO:0007669"/>
    <property type="project" value="UniProtKB-KW"/>
</dbReference>
<dbReference type="CDD" id="cd05325">
    <property type="entry name" value="carb_red_sniffer_like_SDR_c"/>
    <property type="match status" value="1"/>
</dbReference>
<dbReference type="Gene3D" id="3.40.50.720">
    <property type="entry name" value="NAD(P)-binding Rossmann-like Domain"/>
    <property type="match status" value="1"/>
</dbReference>
<dbReference type="InterPro" id="IPR036291">
    <property type="entry name" value="NAD(P)-bd_dom_sf"/>
</dbReference>
<dbReference type="InterPro" id="IPR052184">
    <property type="entry name" value="SDR_enzymes"/>
</dbReference>
<dbReference type="InterPro" id="IPR002347">
    <property type="entry name" value="SDR_fam"/>
</dbReference>
<dbReference type="PANTHER" id="PTHR45458:SF1">
    <property type="entry name" value="SHORT CHAIN DEHYDROGENASE"/>
    <property type="match status" value="1"/>
</dbReference>
<dbReference type="PANTHER" id="PTHR45458">
    <property type="entry name" value="SHORT-CHAIN DEHYDROGENASE/REDUCTASE SDR"/>
    <property type="match status" value="1"/>
</dbReference>
<dbReference type="Pfam" id="PF00106">
    <property type="entry name" value="adh_short"/>
    <property type="match status" value="1"/>
</dbReference>
<dbReference type="PRINTS" id="PR00081">
    <property type="entry name" value="GDHRDH"/>
</dbReference>
<dbReference type="PRINTS" id="PR00080">
    <property type="entry name" value="SDRFAMILY"/>
</dbReference>
<dbReference type="SUPFAM" id="SSF51735">
    <property type="entry name" value="NAD(P)-binding Rossmann-fold domains"/>
    <property type="match status" value="1"/>
</dbReference>
<comment type="function">
    <text evidence="1 2 3 6 7">Cell-cell signaling protein required for fruiting body formation, a multicellular developmental program that is induced in response to starvation (PubMed:10220413, PubMed:11298283, PubMed:12923062, PubMed:2107980, PubMed:2118510). Necessary for rippling, cellular aggregation, spore differentiation and for gene expression that is initiated after 6 hours of starvation (PubMed:11298283, PubMed:2107980). In starving cells, the C-signal directly induces aggregation and sporulation, which are induced at distinct threshold levels of C-signaling (PubMed:11298283). Contact with C-signaling induces cells to glide with high speed and low stop and reversal frequencies toward aggregation centers (PubMed:10220413). The C-signal acts as a morphogen and induces distinct events at distinct threshold levels (PubMed:11298283). A regulated increase in the level of C-signaling during development ensures the correct temporal order of aggregation and sporulation (PubMed:11298283).</text>
</comment>
<comment type="activity regulation">
    <text evidence="3">Synthesized as a precursor protein (p25), which is cleaved after secretion to generate the mature active C-signal (p17) (PubMed:12923062). The p25 precursor purified from M.xanthus cells does not display C-signal activity (PubMed:12923062).</text>
</comment>
<comment type="subcellular location">
    <subcellularLocation>
        <location evidence="3 7">Secreted</location>
    </subcellularLocation>
    <subcellularLocation>
        <location evidence="3">Cell outer membrane</location>
    </subcellularLocation>
    <text evidence="3">The CsgA precursor protein (p25) and the mature C-signal protein (p17) are both associated with the outer membrane (PubMed:12923062). Proper localization of p17 to the outer membrane depends on correct export and localization of p25 (PubMed:12923062).</text>
</comment>
<comment type="induction">
    <text evidence="4 8">Expression increases throughout development, reaching its peak during sporulation (PubMed:1372277, PubMed:2152896). Transcription is inhibited by excess nutrients and stimulated by peptidoglycan components and the B signal (PubMed:1372277). The csgA upstream region appears to process information concerning the levels of nutrients, peptidoglycan components and the B signal (PubMed:1372277). In the absence of nutrients, a region extending 400 bp upstream from the start site is necessary for development and maximal expression (PubMed:1372277). In the presence of low levels of nutrients, a region extending approximately 930 bp upstream is essential for the same tasks (PubMed:1372277).</text>
</comment>
<comment type="PTM">
    <text evidence="3 5">The mature C-signal (p17) is derived from the precursor sequence (p25) by proteolytic cleavage (PubMed:12923062, PubMed:18854146). The subtilisin-like protease PopC is directly responsible for cleavage of p25 to p17 (PubMed:18854146). The cleavage site is probably located between amino acid residues 60 and 68 in p25 (PubMed:12923062).</text>
</comment>
<comment type="disruption phenotype">
    <text evidence="6">Mutants fail to form proper multicellular aggregates, to differentiate from rod-shaped cells to environmentally resistant spores and to express development-specific genes.</text>
</comment>
<comment type="miscellaneous">
    <text evidence="2">Overproduction of the CsgA protein has dramatic effects on the developmental program: the rippling stage is bypassed, aggregation occurs prematurely and results in the formation of many small fruiting bodies, sporulation occurs prematurely, C-signal-dependent gene expression is induced prematurely, and aggregation and sporulation are uncoupled (PubMed:11298283). Reduced synthesis of the CsgA protein causes delayed aggregation, reduced sporulation and the formation of large fruiting bodies (PubMed:11298283).</text>
</comment>
<accession>P21158</accession>
<feature type="propeptide" id="PRO_0000458148" evidence="3 5">
    <location>
        <begin position="1"/>
        <end status="unknown"/>
    </location>
</feature>
<feature type="chain" id="PRO_0000079394" description="C-signal">
    <location>
        <begin status="unknown"/>
        <end position="166"/>
    </location>
</feature>
<evidence type="ECO:0000269" key="1">
    <source>
    </source>
</evidence>
<evidence type="ECO:0000269" key="2">
    <source>
    </source>
</evidence>
<evidence type="ECO:0000269" key="3">
    <source>
    </source>
</evidence>
<evidence type="ECO:0000269" key="4">
    <source>
    </source>
</evidence>
<evidence type="ECO:0000269" key="5">
    <source>
    </source>
</evidence>
<evidence type="ECO:0000269" key="6">
    <source>
    </source>
</evidence>
<evidence type="ECO:0000269" key="7">
    <source>
    </source>
</evidence>
<evidence type="ECO:0000269" key="8">
    <source>
    </source>
</evidence>
<evidence type="ECO:0000303" key="9">
    <source>
    </source>
</evidence>
<evidence type="ECO:0000303" key="10">
    <source>
    </source>
</evidence>
<evidence type="ECO:0000303" key="11">
    <source>
    </source>
</evidence>
<evidence type="ECO:0000303" key="12">
    <source>
    </source>
</evidence>
<evidence type="ECO:0000303" key="13">
    <source>
    </source>
</evidence>
<evidence type="ECO:0000303" key="14">
    <source>
    </source>
</evidence>
<proteinExistence type="evidence at protein level"/>
<organism>
    <name type="scientific">Myxococcus xanthus</name>
    <dbReference type="NCBI Taxonomy" id="34"/>
    <lineage>
        <taxon>Bacteria</taxon>
        <taxon>Pseudomonadati</taxon>
        <taxon>Myxococcota</taxon>
        <taxon>Myxococcia</taxon>
        <taxon>Myxococcales</taxon>
        <taxon>Cystobacterineae</taxon>
        <taxon>Myxococcaceae</taxon>
        <taxon>Myxococcus</taxon>
    </lineage>
</organism>
<sequence length="166" mass="17741">MRAFATNVCTGPVDVLINNAGVSGLWCALGDVDYADMARTFTINALGPLRVTSAMLPGLRQGALRRVAHVTSRMGSLAANTDGGAYAYRMSKAALNMAVRSMSTDLRPEGFVTVLLHPGWVQTDMGGPDATLPAPDSVRGMLRVIDGLNPEHSGRFFDYQGTEVPW</sequence>
<keyword id="KW-0998">Cell outer membrane</keyword>
<keyword id="KW-0903">Direct protein sequencing</keyword>
<keyword id="KW-0293">Fruiting body</keyword>
<keyword id="KW-0472">Membrane</keyword>
<keyword id="KW-0964">Secreted</keyword>
<keyword id="KW-0749">Sporulation</keyword>
<keyword id="KW-0346">Stress response</keyword>